<gene>
    <name evidence="1" type="primary">dnaK</name>
    <name type="ordered locus">SFV_0012</name>
</gene>
<protein>
    <recommendedName>
        <fullName evidence="1">Chaperone protein DnaK</fullName>
    </recommendedName>
    <alternativeName>
        <fullName evidence="1">HSP70</fullName>
    </alternativeName>
    <alternativeName>
        <fullName evidence="1">Heat shock 70 kDa protein</fullName>
    </alternativeName>
    <alternativeName>
        <fullName evidence="1">Heat shock protein 70</fullName>
    </alternativeName>
</protein>
<feature type="chain" id="PRO_1000059669" description="Chaperone protein DnaK">
    <location>
        <begin position="1"/>
        <end position="638"/>
    </location>
</feature>
<feature type="region of interest" description="Disordered" evidence="2">
    <location>
        <begin position="602"/>
        <end position="638"/>
    </location>
</feature>
<feature type="compositionally biased region" description="Low complexity" evidence="2">
    <location>
        <begin position="602"/>
        <end position="620"/>
    </location>
</feature>
<feature type="modified residue" description="N6-acetyllysine" evidence="1">
    <location>
        <position position="109"/>
    </location>
</feature>
<feature type="modified residue" description="Phosphothreonine; by autocatalysis" evidence="1">
    <location>
        <position position="199"/>
    </location>
</feature>
<feature type="modified residue" description="N6-acetyllysine" evidence="1">
    <location>
        <position position="245"/>
    </location>
</feature>
<feature type="modified residue" description="N6-acetyllysine" evidence="1">
    <location>
        <position position="304"/>
    </location>
</feature>
<feature type="modified residue" description="N6-acetyllysine" evidence="1">
    <location>
        <position position="421"/>
    </location>
</feature>
<feature type="modified residue" description="N6-acetyllysine" evidence="1">
    <location>
        <position position="556"/>
    </location>
</feature>
<name>DNAK_SHIF8</name>
<organism>
    <name type="scientific">Shigella flexneri serotype 5b (strain 8401)</name>
    <dbReference type="NCBI Taxonomy" id="373384"/>
    <lineage>
        <taxon>Bacteria</taxon>
        <taxon>Pseudomonadati</taxon>
        <taxon>Pseudomonadota</taxon>
        <taxon>Gammaproteobacteria</taxon>
        <taxon>Enterobacterales</taxon>
        <taxon>Enterobacteriaceae</taxon>
        <taxon>Shigella</taxon>
    </lineage>
</organism>
<accession>Q0T8H6</accession>
<reference key="1">
    <citation type="journal article" date="2006" name="BMC Genomics">
        <title>Complete genome sequence of Shigella flexneri 5b and comparison with Shigella flexneri 2a.</title>
        <authorList>
            <person name="Nie H."/>
            <person name="Yang F."/>
            <person name="Zhang X."/>
            <person name="Yang J."/>
            <person name="Chen L."/>
            <person name="Wang J."/>
            <person name="Xiong Z."/>
            <person name="Peng J."/>
            <person name="Sun L."/>
            <person name="Dong J."/>
            <person name="Xue Y."/>
            <person name="Xu X."/>
            <person name="Chen S."/>
            <person name="Yao Z."/>
            <person name="Shen Y."/>
            <person name="Jin Q."/>
        </authorList>
    </citation>
    <scope>NUCLEOTIDE SEQUENCE [LARGE SCALE GENOMIC DNA]</scope>
    <source>
        <strain>8401</strain>
    </source>
</reference>
<comment type="function">
    <text evidence="1">Acts as a chaperone.</text>
</comment>
<comment type="induction">
    <text evidence="1">By stress conditions e.g. heat shock.</text>
</comment>
<comment type="similarity">
    <text evidence="1">Belongs to the heat shock protein 70 family.</text>
</comment>
<sequence length="638" mass="69127">MGKIIGIDLGTTNSCVAIMDGTIPRVLENAEGDRTTPSIIAYTQDGETLVGQPAKRQAVTNPQNTLFAIKRLIGRRFQDEEVQRDVSIMPFKIIAADNGDAWVEVKGQKMAPPQISAEVLKKMKKTAEDYLGEPVTEAVITVPAYFNDAQRQATKDAGRIAGLEVKRIINEPTAAALAYGLDKGTGNRTIAVYDLGGGTFDISIIEIDEVDGEKTFEVLATNGDTHLGGEDFDSRLINYLVEEFKKDQGIDLRNDPLAMQRLKEAAEKAKIELSSAQQTDVNLPYITADATGPKHMNIKVTRAKLESLVEDLVNRSIEPLKVALQDAGLSVSDIDDVILVGGQTRMPMVQKKVAEFFGKEPRKDVNPDEAVAIGAAVQGGVLTGDVKDVLLLDVTPLSLGIETMGGVMTTLIAKNTTIPTKHSQVFSTAEDNQSAVTIHVLQGERKRAADNKSLGQFNLDGINPAPRGMPQIEVTFDIDADGILHVSAKDKNSGKEQKITIKASSGLNEDEIQKMVRDAEANAEADRKFEELVQTRNQGDHLLHSTRKQVEEAGDKLPADDKTAIESALTALETALKGEDKAAIEAKMQELAQVSQKLMEIAQQQHAQQQTAGADASANNAKDDDVVDAEFEEVKDKK</sequence>
<keyword id="KW-0007">Acetylation</keyword>
<keyword id="KW-0067">ATP-binding</keyword>
<keyword id="KW-0143">Chaperone</keyword>
<keyword id="KW-0547">Nucleotide-binding</keyword>
<keyword id="KW-0597">Phosphoprotein</keyword>
<keyword id="KW-0346">Stress response</keyword>
<dbReference type="EMBL" id="CP000266">
    <property type="protein sequence ID" value="ABF02300.1"/>
    <property type="molecule type" value="Genomic_DNA"/>
</dbReference>
<dbReference type="RefSeq" id="WP_000516121.1">
    <property type="nucleotide sequence ID" value="NC_008258.1"/>
</dbReference>
<dbReference type="SMR" id="Q0T8H6"/>
<dbReference type="KEGG" id="sfv:SFV_0012"/>
<dbReference type="HOGENOM" id="CLU_005965_2_1_6"/>
<dbReference type="Proteomes" id="UP000000659">
    <property type="component" value="Chromosome"/>
</dbReference>
<dbReference type="GO" id="GO:0005524">
    <property type="term" value="F:ATP binding"/>
    <property type="evidence" value="ECO:0007669"/>
    <property type="project" value="UniProtKB-UniRule"/>
</dbReference>
<dbReference type="GO" id="GO:0140662">
    <property type="term" value="F:ATP-dependent protein folding chaperone"/>
    <property type="evidence" value="ECO:0007669"/>
    <property type="project" value="InterPro"/>
</dbReference>
<dbReference type="GO" id="GO:0051082">
    <property type="term" value="F:unfolded protein binding"/>
    <property type="evidence" value="ECO:0007669"/>
    <property type="project" value="InterPro"/>
</dbReference>
<dbReference type="CDD" id="cd10234">
    <property type="entry name" value="ASKHA_NBD_HSP70_DnaK-like"/>
    <property type="match status" value="1"/>
</dbReference>
<dbReference type="FunFam" id="2.60.34.10:FF:000014">
    <property type="entry name" value="Chaperone protein DnaK HSP70"/>
    <property type="match status" value="1"/>
</dbReference>
<dbReference type="FunFam" id="3.30.30.30:FF:000003">
    <property type="entry name" value="Heat shock protein 9"/>
    <property type="match status" value="1"/>
</dbReference>
<dbReference type="FunFam" id="1.20.1270.10:FF:000001">
    <property type="entry name" value="Molecular chaperone DnaK"/>
    <property type="match status" value="1"/>
</dbReference>
<dbReference type="FunFam" id="3.30.420.40:FF:000004">
    <property type="entry name" value="Molecular chaperone DnaK"/>
    <property type="match status" value="1"/>
</dbReference>
<dbReference type="FunFam" id="3.90.640.10:FF:000003">
    <property type="entry name" value="Molecular chaperone DnaK"/>
    <property type="match status" value="1"/>
</dbReference>
<dbReference type="Gene3D" id="1.20.1270.10">
    <property type="match status" value="1"/>
</dbReference>
<dbReference type="Gene3D" id="3.30.420.40">
    <property type="match status" value="2"/>
</dbReference>
<dbReference type="Gene3D" id="3.90.640.10">
    <property type="entry name" value="Actin, Chain A, domain 4"/>
    <property type="match status" value="1"/>
</dbReference>
<dbReference type="Gene3D" id="2.60.34.10">
    <property type="entry name" value="Substrate Binding Domain Of DNAk, Chain A, domain 1"/>
    <property type="match status" value="1"/>
</dbReference>
<dbReference type="HAMAP" id="MF_00332">
    <property type="entry name" value="DnaK"/>
    <property type="match status" value="1"/>
</dbReference>
<dbReference type="InterPro" id="IPR043129">
    <property type="entry name" value="ATPase_NBD"/>
</dbReference>
<dbReference type="InterPro" id="IPR012725">
    <property type="entry name" value="Chaperone_DnaK"/>
</dbReference>
<dbReference type="InterPro" id="IPR018181">
    <property type="entry name" value="Heat_shock_70_CS"/>
</dbReference>
<dbReference type="InterPro" id="IPR029048">
    <property type="entry name" value="HSP70_C_sf"/>
</dbReference>
<dbReference type="InterPro" id="IPR029047">
    <property type="entry name" value="HSP70_peptide-bd_sf"/>
</dbReference>
<dbReference type="InterPro" id="IPR013126">
    <property type="entry name" value="Hsp_70_fam"/>
</dbReference>
<dbReference type="NCBIfam" id="NF001413">
    <property type="entry name" value="PRK00290.1"/>
    <property type="match status" value="1"/>
</dbReference>
<dbReference type="NCBIfam" id="NF003520">
    <property type="entry name" value="PRK05183.1"/>
    <property type="match status" value="1"/>
</dbReference>
<dbReference type="NCBIfam" id="TIGR02350">
    <property type="entry name" value="prok_dnaK"/>
    <property type="match status" value="1"/>
</dbReference>
<dbReference type="PANTHER" id="PTHR19375">
    <property type="entry name" value="HEAT SHOCK PROTEIN 70KDA"/>
    <property type="match status" value="1"/>
</dbReference>
<dbReference type="Pfam" id="PF00012">
    <property type="entry name" value="HSP70"/>
    <property type="match status" value="1"/>
</dbReference>
<dbReference type="PRINTS" id="PR00301">
    <property type="entry name" value="HEATSHOCK70"/>
</dbReference>
<dbReference type="SUPFAM" id="SSF53067">
    <property type="entry name" value="Actin-like ATPase domain"/>
    <property type="match status" value="2"/>
</dbReference>
<dbReference type="SUPFAM" id="SSF100934">
    <property type="entry name" value="Heat shock protein 70kD (HSP70), C-terminal subdomain"/>
    <property type="match status" value="1"/>
</dbReference>
<dbReference type="SUPFAM" id="SSF100920">
    <property type="entry name" value="Heat shock protein 70kD (HSP70), peptide-binding domain"/>
    <property type="match status" value="1"/>
</dbReference>
<dbReference type="PROSITE" id="PS00297">
    <property type="entry name" value="HSP70_1"/>
    <property type="match status" value="1"/>
</dbReference>
<dbReference type="PROSITE" id="PS00329">
    <property type="entry name" value="HSP70_2"/>
    <property type="match status" value="1"/>
</dbReference>
<dbReference type="PROSITE" id="PS01036">
    <property type="entry name" value="HSP70_3"/>
    <property type="match status" value="1"/>
</dbReference>
<evidence type="ECO:0000255" key="1">
    <source>
        <dbReference type="HAMAP-Rule" id="MF_00332"/>
    </source>
</evidence>
<evidence type="ECO:0000256" key="2">
    <source>
        <dbReference type="SAM" id="MobiDB-lite"/>
    </source>
</evidence>
<proteinExistence type="inferred from homology"/>